<accession>Q88WT5</accession>
<accession>F9UNR5</accession>
<gene>
    <name evidence="1" type="primary">nadD</name>
    <name type="ordered locus">lp_1530</name>
</gene>
<proteinExistence type="inferred from homology"/>
<organism>
    <name type="scientific">Lactiplantibacillus plantarum (strain ATCC BAA-793 / NCIMB 8826 / WCFS1)</name>
    <name type="common">Lactobacillus plantarum</name>
    <dbReference type="NCBI Taxonomy" id="220668"/>
    <lineage>
        <taxon>Bacteria</taxon>
        <taxon>Bacillati</taxon>
        <taxon>Bacillota</taxon>
        <taxon>Bacilli</taxon>
        <taxon>Lactobacillales</taxon>
        <taxon>Lactobacillaceae</taxon>
        <taxon>Lactiplantibacillus</taxon>
    </lineage>
</organism>
<comment type="function">
    <text evidence="1">Catalyzes the reversible adenylation of nicotinate mononucleotide (NaMN) to nicotinic acid adenine dinucleotide (NaAD).</text>
</comment>
<comment type="catalytic activity">
    <reaction evidence="1">
        <text>nicotinate beta-D-ribonucleotide + ATP + H(+) = deamido-NAD(+) + diphosphate</text>
        <dbReference type="Rhea" id="RHEA:22860"/>
        <dbReference type="ChEBI" id="CHEBI:15378"/>
        <dbReference type="ChEBI" id="CHEBI:30616"/>
        <dbReference type="ChEBI" id="CHEBI:33019"/>
        <dbReference type="ChEBI" id="CHEBI:57502"/>
        <dbReference type="ChEBI" id="CHEBI:58437"/>
        <dbReference type="EC" id="2.7.7.18"/>
    </reaction>
</comment>
<comment type="pathway">
    <text evidence="1">Cofactor biosynthesis; NAD(+) biosynthesis; deamido-NAD(+) from nicotinate D-ribonucleotide: step 1/1.</text>
</comment>
<comment type="similarity">
    <text evidence="1">Belongs to the NadD family.</text>
</comment>
<sequence>MQTVNQTATKVLTETVTAIPHRRVGILGGTFNPPHLGHLIMAQQVGDQLGLDEVRFMPDAQPPHVDEKKTIAVEDRANMVQEAIVDNPLFRLETAEIERGGKSYTYETMKFLKAKHPDTQYYFIIGGDMVDYLHTWYHIDELVKLVTFVGIKRTGYPTTSQYPVIWVDAPLIDISSTQIRQKISHGHSVRYLVPEAVAAYIKEHHLYEQND</sequence>
<keyword id="KW-0067">ATP-binding</keyword>
<keyword id="KW-0520">NAD</keyword>
<keyword id="KW-0547">Nucleotide-binding</keyword>
<keyword id="KW-0548">Nucleotidyltransferase</keyword>
<keyword id="KW-0662">Pyridine nucleotide biosynthesis</keyword>
<keyword id="KW-1185">Reference proteome</keyword>
<keyword id="KW-0808">Transferase</keyword>
<feature type="chain" id="PRO_0000181418" description="Probable nicotinate-nucleotide adenylyltransferase">
    <location>
        <begin position="1"/>
        <end position="211"/>
    </location>
</feature>
<name>NADD_LACPL</name>
<reference key="1">
    <citation type="journal article" date="2003" name="Proc. Natl. Acad. Sci. U.S.A.">
        <title>Complete genome sequence of Lactobacillus plantarum WCFS1.</title>
        <authorList>
            <person name="Kleerebezem M."/>
            <person name="Boekhorst J."/>
            <person name="van Kranenburg R."/>
            <person name="Molenaar D."/>
            <person name="Kuipers O.P."/>
            <person name="Leer R."/>
            <person name="Tarchini R."/>
            <person name="Peters S.A."/>
            <person name="Sandbrink H.M."/>
            <person name="Fiers M.W.E.J."/>
            <person name="Stiekema W."/>
            <person name="Klein Lankhorst R.M."/>
            <person name="Bron P.A."/>
            <person name="Hoffer S.M."/>
            <person name="Nierop Groot M.N."/>
            <person name="Kerkhoven R."/>
            <person name="De Vries M."/>
            <person name="Ursing B."/>
            <person name="De Vos W.M."/>
            <person name="Siezen R.J."/>
        </authorList>
    </citation>
    <scope>NUCLEOTIDE SEQUENCE [LARGE SCALE GENOMIC DNA]</scope>
    <source>
        <strain>ATCC BAA-793 / NCIMB 8826 / WCFS1</strain>
    </source>
</reference>
<reference key="2">
    <citation type="journal article" date="2012" name="J. Bacteriol.">
        <title>Complete resequencing and reannotation of the Lactobacillus plantarum WCFS1 genome.</title>
        <authorList>
            <person name="Siezen R.J."/>
            <person name="Francke C."/>
            <person name="Renckens B."/>
            <person name="Boekhorst J."/>
            <person name="Wels M."/>
            <person name="Kleerebezem M."/>
            <person name="van Hijum S.A."/>
        </authorList>
    </citation>
    <scope>NUCLEOTIDE SEQUENCE [LARGE SCALE GENOMIC DNA]</scope>
    <scope>GENOME REANNOTATION</scope>
    <source>
        <strain>ATCC BAA-793 / NCIMB 8826 / WCFS1</strain>
    </source>
</reference>
<protein>
    <recommendedName>
        <fullName evidence="1">Probable nicotinate-nucleotide adenylyltransferase</fullName>
        <ecNumber evidence="1">2.7.7.18</ecNumber>
    </recommendedName>
    <alternativeName>
        <fullName evidence="1">Deamido-NAD(+) diphosphorylase</fullName>
    </alternativeName>
    <alternativeName>
        <fullName evidence="1">Deamido-NAD(+) pyrophosphorylase</fullName>
    </alternativeName>
    <alternativeName>
        <fullName evidence="1">Nicotinate mononucleotide adenylyltransferase</fullName>
        <shortName evidence="1">NaMN adenylyltransferase</shortName>
    </alternativeName>
</protein>
<dbReference type="EC" id="2.7.7.18" evidence="1"/>
<dbReference type="EMBL" id="AL935263">
    <property type="protein sequence ID" value="CCC78854.1"/>
    <property type="molecule type" value="Genomic_DNA"/>
</dbReference>
<dbReference type="RefSeq" id="WP_003640290.1">
    <property type="nucleotide sequence ID" value="NC_004567.2"/>
</dbReference>
<dbReference type="RefSeq" id="YP_004889368.1">
    <property type="nucleotide sequence ID" value="NC_004567.2"/>
</dbReference>
<dbReference type="SMR" id="Q88WT5"/>
<dbReference type="STRING" id="220668.lp_1530"/>
<dbReference type="EnsemblBacteria" id="CCC78854">
    <property type="protein sequence ID" value="CCC78854"/>
    <property type="gene ID" value="lp_1530"/>
</dbReference>
<dbReference type="KEGG" id="lpl:lp_1530"/>
<dbReference type="PATRIC" id="fig|220668.9.peg.1288"/>
<dbReference type="eggNOG" id="COG1057">
    <property type="taxonomic scope" value="Bacteria"/>
</dbReference>
<dbReference type="HOGENOM" id="CLU_069765_3_1_9"/>
<dbReference type="OrthoDB" id="5295945at2"/>
<dbReference type="PhylomeDB" id="Q88WT5"/>
<dbReference type="UniPathway" id="UPA00253">
    <property type="reaction ID" value="UER00332"/>
</dbReference>
<dbReference type="Proteomes" id="UP000000432">
    <property type="component" value="Chromosome"/>
</dbReference>
<dbReference type="GO" id="GO:0005524">
    <property type="term" value="F:ATP binding"/>
    <property type="evidence" value="ECO:0007669"/>
    <property type="project" value="UniProtKB-KW"/>
</dbReference>
<dbReference type="GO" id="GO:0004515">
    <property type="term" value="F:nicotinate-nucleotide adenylyltransferase activity"/>
    <property type="evidence" value="ECO:0007669"/>
    <property type="project" value="UniProtKB-UniRule"/>
</dbReference>
<dbReference type="GO" id="GO:0009435">
    <property type="term" value="P:NAD biosynthetic process"/>
    <property type="evidence" value="ECO:0007669"/>
    <property type="project" value="UniProtKB-UniRule"/>
</dbReference>
<dbReference type="CDD" id="cd02165">
    <property type="entry name" value="NMNAT"/>
    <property type="match status" value="1"/>
</dbReference>
<dbReference type="Gene3D" id="3.40.50.620">
    <property type="entry name" value="HUPs"/>
    <property type="match status" value="1"/>
</dbReference>
<dbReference type="HAMAP" id="MF_00244">
    <property type="entry name" value="NaMN_adenylyltr"/>
    <property type="match status" value="1"/>
</dbReference>
<dbReference type="InterPro" id="IPR004821">
    <property type="entry name" value="Cyt_trans-like"/>
</dbReference>
<dbReference type="InterPro" id="IPR005248">
    <property type="entry name" value="NadD/NMNAT"/>
</dbReference>
<dbReference type="InterPro" id="IPR014729">
    <property type="entry name" value="Rossmann-like_a/b/a_fold"/>
</dbReference>
<dbReference type="NCBIfam" id="TIGR00482">
    <property type="entry name" value="nicotinate (nicotinamide) nucleotide adenylyltransferase"/>
    <property type="match status" value="1"/>
</dbReference>
<dbReference type="NCBIfam" id="NF000840">
    <property type="entry name" value="PRK00071.1-3"/>
    <property type="match status" value="1"/>
</dbReference>
<dbReference type="NCBIfam" id="NF000841">
    <property type="entry name" value="PRK00071.1-4"/>
    <property type="match status" value="1"/>
</dbReference>
<dbReference type="PANTHER" id="PTHR39321">
    <property type="entry name" value="NICOTINATE-NUCLEOTIDE ADENYLYLTRANSFERASE-RELATED"/>
    <property type="match status" value="1"/>
</dbReference>
<dbReference type="PANTHER" id="PTHR39321:SF3">
    <property type="entry name" value="PHOSPHOPANTETHEINE ADENYLYLTRANSFERASE"/>
    <property type="match status" value="1"/>
</dbReference>
<dbReference type="Pfam" id="PF01467">
    <property type="entry name" value="CTP_transf_like"/>
    <property type="match status" value="1"/>
</dbReference>
<dbReference type="SUPFAM" id="SSF52374">
    <property type="entry name" value="Nucleotidylyl transferase"/>
    <property type="match status" value="1"/>
</dbReference>
<evidence type="ECO:0000255" key="1">
    <source>
        <dbReference type="HAMAP-Rule" id="MF_00244"/>
    </source>
</evidence>